<feature type="chain" id="PRO_0000386948" description="Ribosomal RNA small subunit methyltransferase H">
    <location>
        <begin position="1"/>
        <end position="318"/>
    </location>
</feature>
<feature type="binding site" evidence="1">
    <location>
        <begin position="34"/>
        <end position="36"/>
    </location>
    <ligand>
        <name>S-adenosyl-L-methionine</name>
        <dbReference type="ChEBI" id="CHEBI:59789"/>
    </ligand>
</feature>
<feature type="binding site" evidence="1">
    <location>
        <position position="53"/>
    </location>
    <ligand>
        <name>S-adenosyl-L-methionine</name>
        <dbReference type="ChEBI" id="CHEBI:59789"/>
    </ligand>
</feature>
<feature type="binding site" evidence="1">
    <location>
        <position position="82"/>
    </location>
    <ligand>
        <name>S-adenosyl-L-methionine</name>
        <dbReference type="ChEBI" id="CHEBI:59789"/>
    </ligand>
</feature>
<feature type="binding site" evidence="1">
    <location>
        <position position="103"/>
    </location>
    <ligand>
        <name>S-adenosyl-L-methionine</name>
        <dbReference type="ChEBI" id="CHEBI:59789"/>
    </ligand>
</feature>
<feature type="binding site" evidence="1">
    <location>
        <position position="110"/>
    </location>
    <ligand>
        <name>S-adenosyl-L-methionine</name>
        <dbReference type="ChEBI" id="CHEBI:59789"/>
    </ligand>
</feature>
<name>RSMH_LIMRJ</name>
<reference key="1">
    <citation type="journal article" date="2008" name="DNA Res.">
        <title>Comparative genome analysis of Lactobacillus reuteri and Lactobacillus fermentum reveal a genomic island for reuterin and cobalamin production.</title>
        <authorList>
            <person name="Morita H."/>
            <person name="Toh H."/>
            <person name="Fukuda S."/>
            <person name="Horikawa H."/>
            <person name="Oshima K."/>
            <person name="Suzuki T."/>
            <person name="Murakami M."/>
            <person name="Hisamatsu S."/>
            <person name="Kato Y."/>
            <person name="Takizawa T."/>
            <person name="Fukuoka H."/>
            <person name="Yoshimura T."/>
            <person name="Itoh K."/>
            <person name="O'Sullivan D.J."/>
            <person name="McKay L.L."/>
            <person name="Ohno H."/>
            <person name="Kikuchi J."/>
            <person name="Masaoka T."/>
            <person name="Hattori M."/>
        </authorList>
    </citation>
    <scope>NUCLEOTIDE SEQUENCE [LARGE SCALE GENOMIC DNA]</scope>
    <source>
        <strain>JCM 1112</strain>
    </source>
</reference>
<dbReference type="EC" id="2.1.1.199" evidence="1"/>
<dbReference type="EMBL" id="AP007281">
    <property type="protein sequence ID" value="BAG25083.1"/>
    <property type="molecule type" value="Genomic_DNA"/>
</dbReference>
<dbReference type="RefSeq" id="WP_003668328.1">
    <property type="nucleotide sequence ID" value="NC_010609.1"/>
</dbReference>
<dbReference type="SMR" id="B2G6K1"/>
<dbReference type="KEGG" id="lrf:LAR_0567"/>
<dbReference type="HOGENOM" id="CLU_038422_2_0_9"/>
<dbReference type="GO" id="GO:0005737">
    <property type="term" value="C:cytoplasm"/>
    <property type="evidence" value="ECO:0007669"/>
    <property type="project" value="UniProtKB-SubCell"/>
</dbReference>
<dbReference type="GO" id="GO:0071424">
    <property type="term" value="F:rRNA (cytosine-N4-)-methyltransferase activity"/>
    <property type="evidence" value="ECO:0007669"/>
    <property type="project" value="UniProtKB-UniRule"/>
</dbReference>
<dbReference type="GO" id="GO:0070475">
    <property type="term" value="P:rRNA base methylation"/>
    <property type="evidence" value="ECO:0007669"/>
    <property type="project" value="UniProtKB-UniRule"/>
</dbReference>
<dbReference type="FunFam" id="1.10.150.170:FF:000001">
    <property type="entry name" value="Ribosomal RNA small subunit methyltransferase H"/>
    <property type="match status" value="1"/>
</dbReference>
<dbReference type="Gene3D" id="1.10.150.170">
    <property type="entry name" value="Putative methyltransferase TM0872, insert domain"/>
    <property type="match status" value="1"/>
</dbReference>
<dbReference type="Gene3D" id="3.40.50.150">
    <property type="entry name" value="Vaccinia Virus protein VP39"/>
    <property type="match status" value="1"/>
</dbReference>
<dbReference type="HAMAP" id="MF_01007">
    <property type="entry name" value="16SrRNA_methyltr_H"/>
    <property type="match status" value="1"/>
</dbReference>
<dbReference type="InterPro" id="IPR002903">
    <property type="entry name" value="RsmH"/>
</dbReference>
<dbReference type="InterPro" id="IPR023397">
    <property type="entry name" value="SAM-dep_MeTrfase_MraW_recog"/>
</dbReference>
<dbReference type="InterPro" id="IPR029063">
    <property type="entry name" value="SAM-dependent_MTases_sf"/>
</dbReference>
<dbReference type="NCBIfam" id="TIGR00006">
    <property type="entry name" value="16S rRNA (cytosine(1402)-N(4))-methyltransferase RsmH"/>
    <property type="match status" value="1"/>
</dbReference>
<dbReference type="PANTHER" id="PTHR11265:SF0">
    <property type="entry name" value="12S RRNA N4-METHYLCYTIDINE METHYLTRANSFERASE"/>
    <property type="match status" value="1"/>
</dbReference>
<dbReference type="PANTHER" id="PTHR11265">
    <property type="entry name" value="S-ADENOSYL-METHYLTRANSFERASE MRAW"/>
    <property type="match status" value="1"/>
</dbReference>
<dbReference type="Pfam" id="PF01795">
    <property type="entry name" value="Methyltransf_5"/>
    <property type="match status" value="1"/>
</dbReference>
<dbReference type="PIRSF" id="PIRSF004486">
    <property type="entry name" value="MraW"/>
    <property type="match status" value="1"/>
</dbReference>
<dbReference type="SUPFAM" id="SSF81799">
    <property type="entry name" value="Putative methyltransferase TM0872, insert domain"/>
    <property type="match status" value="1"/>
</dbReference>
<dbReference type="SUPFAM" id="SSF53335">
    <property type="entry name" value="S-adenosyl-L-methionine-dependent methyltransferases"/>
    <property type="match status" value="1"/>
</dbReference>
<protein>
    <recommendedName>
        <fullName evidence="1">Ribosomal RNA small subunit methyltransferase H</fullName>
        <ecNumber evidence="1">2.1.1.199</ecNumber>
    </recommendedName>
    <alternativeName>
        <fullName evidence="1">16S rRNA m(4)C1402 methyltransferase</fullName>
    </alternativeName>
    <alternativeName>
        <fullName evidence="1">rRNA (cytosine-N(4)-)-methyltransferase RsmH</fullName>
    </alternativeName>
</protein>
<organism>
    <name type="scientific">Limosilactobacillus reuteri subsp. reuteri (strain JCM 1112)</name>
    <name type="common">Lactobacillus reuteri</name>
    <dbReference type="NCBI Taxonomy" id="557433"/>
    <lineage>
        <taxon>Bacteria</taxon>
        <taxon>Bacillati</taxon>
        <taxon>Bacillota</taxon>
        <taxon>Bacilli</taxon>
        <taxon>Lactobacillales</taxon>
        <taxon>Lactobacillaceae</taxon>
        <taxon>Limosilactobacillus</taxon>
    </lineage>
</organism>
<proteinExistence type="inferred from homology"/>
<keyword id="KW-0963">Cytoplasm</keyword>
<keyword id="KW-0489">Methyltransferase</keyword>
<keyword id="KW-0698">rRNA processing</keyword>
<keyword id="KW-0949">S-adenosyl-L-methionine</keyword>
<keyword id="KW-0808">Transferase</keyword>
<sequence>MAEFKHVTVLLKEAVAGLNVQPTGTYVDATLGGGGHTQAILQQLVDGHLYSFDQDQTAIDYNKEHLKTAIEQQKLTLVEDNFRNLKAELNSYNVKHVNGILYDLGVSSPQFDDAKRGFSYQHDAPLDMRMNQEQKLSAMEVVNEWPYERLVKILYRYGEEKFAKSIARKIEQRRKVAPIKTTFELVDVIKEGIPAAARRHGGHPAKKSFQAIRIAVNDELGALEESLEQALDLLDVGGRISVITFQSLEDRLVKTMFREKTSLSGDVPQGLPVIPAGMEPNFKLINKKPIVASDEELAANHRAHSAKLRIIEKIREGK</sequence>
<comment type="function">
    <text evidence="1">Specifically methylates the N4 position of cytidine in position 1402 (C1402) of 16S rRNA.</text>
</comment>
<comment type="catalytic activity">
    <reaction evidence="1">
        <text>cytidine(1402) in 16S rRNA + S-adenosyl-L-methionine = N(4)-methylcytidine(1402) in 16S rRNA + S-adenosyl-L-homocysteine + H(+)</text>
        <dbReference type="Rhea" id="RHEA:42928"/>
        <dbReference type="Rhea" id="RHEA-COMP:10286"/>
        <dbReference type="Rhea" id="RHEA-COMP:10287"/>
        <dbReference type="ChEBI" id="CHEBI:15378"/>
        <dbReference type="ChEBI" id="CHEBI:57856"/>
        <dbReference type="ChEBI" id="CHEBI:59789"/>
        <dbReference type="ChEBI" id="CHEBI:74506"/>
        <dbReference type="ChEBI" id="CHEBI:82748"/>
        <dbReference type="EC" id="2.1.1.199"/>
    </reaction>
</comment>
<comment type="subcellular location">
    <subcellularLocation>
        <location evidence="1">Cytoplasm</location>
    </subcellularLocation>
</comment>
<comment type="similarity">
    <text evidence="1">Belongs to the methyltransferase superfamily. RsmH family.</text>
</comment>
<accession>B2G6K1</accession>
<gene>
    <name evidence="1" type="primary">rsmH</name>
    <name type="synonym">mraW</name>
    <name type="ordered locus">LAR_0567</name>
</gene>
<evidence type="ECO:0000255" key="1">
    <source>
        <dbReference type="HAMAP-Rule" id="MF_01007"/>
    </source>
</evidence>